<reference evidence="4" key="1">
    <citation type="journal article" date="2016" name="J. Nat. Prod.">
        <title>Isolation and Characterization of Cyclotides from Brazilian Psychotria: Significance in Plant Defense and Co-occurrence with Antioxidant Alkaloids.</title>
        <authorList>
            <person name="Matsuura H.N."/>
            <person name="Poth A.G."/>
            <person name="Yendo A.C."/>
            <person name="Fett-Neto A.G."/>
            <person name="Craik D.J."/>
        </authorList>
    </citation>
    <scope>PROTEIN SEQUENCE</scope>
    <scope>MASS SPECTROMETRY</scope>
    <scope>IDENTIFICATION BY MASS SPECTROMETRY</scope>
    <scope>CYCLIZATION</scope>
    <source>
        <tissue evidence="3">Leaf</tissue>
    </source>
</reference>
<keyword id="KW-0903">Direct protein sequencing</keyword>
<keyword id="KW-1015">Disulfide bond</keyword>
<keyword id="KW-0960">Knottin</keyword>
<keyword id="KW-0611">Plant defense</keyword>
<organism>
    <name type="scientific">Psychotria brachyceras</name>
    <dbReference type="NCBI Taxonomy" id="980682"/>
    <lineage>
        <taxon>Eukaryota</taxon>
        <taxon>Viridiplantae</taxon>
        <taxon>Streptophyta</taxon>
        <taxon>Embryophyta</taxon>
        <taxon>Tracheophyta</taxon>
        <taxon>Spermatophyta</taxon>
        <taxon>Magnoliopsida</taxon>
        <taxon>eudicotyledons</taxon>
        <taxon>Gunneridae</taxon>
        <taxon>Pentapetalae</taxon>
        <taxon>asterids</taxon>
        <taxon>lamiids</taxon>
        <taxon>Gentianales</taxon>
        <taxon>Rubiaceae</taxon>
        <taxon>Rubioideae</taxon>
        <taxon>Psychotrieae</taxon>
        <taxon>Psychotria</taxon>
    </lineage>
</organism>
<accession>C0HL26</accession>
<feature type="peptide" id="PRO_0000441788" description="Cyclotide psyleio D" evidence="2">
    <location>
        <begin position="1"/>
        <end position="29"/>
    </location>
</feature>
<feature type="disulfide bond" evidence="1">
    <location>
        <begin position="5"/>
        <end position="19"/>
    </location>
</feature>
<feature type="disulfide bond" evidence="1">
    <location>
        <begin position="9"/>
        <end position="21"/>
    </location>
</feature>
<feature type="disulfide bond" evidence="1">
    <location>
        <begin position="14"/>
        <end position="26"/>
    </location>
</feature>
<feature type="cross-link" description="Cyclopeptide (Gly-Asp)" evidence="5">
    <location>
        <begin position="1"/>
        <end position="29"/>
    </location>
</feature>
<feature type="unsure residue" description="L or I" evidence="3">
    <location>
        <position position="2"/>
    </location>
</feature>
<comment type="function">
    <text evidence="1">Probably participates in a plant defense mechanism.</text>
</comment>
<comment type="domain">
    <text evidence="4">The presence of a 'disulfide through disulfide knot' structurally defines this protein as a knottin.</text>
</comment>
<comment type="PTM">
    <text evidence="1 2">This is a cyclic peptide.</text>
</comment>
<comment type="mass spectrometry" mass="3291.17" method="MALDI" evidence="2"/>
<comment type="similarity">
    <text evidence="1">Belongs to the cyclotide family. Moebius subfamily.</text>
</comment>
<comment type="caution">
    <text evidence="1">This peptide is cyclic. The start position was chosen by similarity to Oak1 (kalata B1) for which the DNA sequence is known.</text>
</comment>
<protein>
    <recommendedName>
        <fullName evidence="3">Cyclotide psyleio D</fullName>
    </recommendedName>
</protein>
<name>CYPLD_PSYBR</name>
<proteinExistence type="evidence at protein level"/>
<sequence length="29" mass="2951">GLPVCGESCFGGTCNTPGCSCTWPVCTRD</sequence>
<dbReference type="SMR" id="C0HL26"/>
<dbReference type="GO" id="GO:0006952">
    <property type="term" value="P:defense response"/>
    <property type="evidence" value="ECO:0007669"/>
    <property type="project" value="UniProtKB-KW"/>
</dbReference>
<dbReference type="InterPro" id="IPR005535">
    <property type="entry name" value="Cyclotide"/>
</dbReference>
<dbReference type="InterPro" id="IPR012324">
    <property type="entry name" value="Cyclotide_moebius_CS"/>
</dbReference>
<dbReference type="InterPro" id="IPR036146">
    <property type="entry name" value="Cyclotide_sf"/>
</dbReference>
<dbReference type="Pfam" id="PF03784">
    <property type="entry name" value="Cyclotide"/>
    <property type="match status" value="1"/>
</dbReference>
<dbReference type="PIRSF" id="PIRSF037891">
    <property type="entry name" value="Cycloviolacin"/>
    <property type="match status" value="1"/>
</dbReference>
<dbReference type="SUPFAM" id="SSF57038">
    <property type="entry name" value="Cyclotides"/>
    <property type="match status" value="1"/>
</dbReference>
<dbReference type="PROSITE" id="PS51052">
    <property type="entry name" value="CYCLOTIDE"/>
    <property type="match status" value="1"/>
</dbReference>
<dbReference type="PROSITE" id="PS60009">
    <property type="entry name" value="CYCLOTIDE_MOEBIUS"/>
    <property type="match status" value="1"/>
</dbReference>
<evidence type="ECO:0000255" key="1">
    <source>
        <dbReference type="PROSITE-ProRule" id="PRU00395"/>
    </source>
</evidence>
<evidence type="ECO:0000269" key="2">
    <source>
    </source>
</evidence>
<evidence type="ECO:0000303" key="3">
    <source>
    </source>
</evidence>
<evidence type="ECO:0000305" key="4"/>
<evidence type="ECO:0000305" key="5">
    <source>
    </source>
</evidence>